<proteinExistence type="evidence at protein level"/>
<reference key="1">
    <citation type="journal article" date="1999" name="Nature">
        <title>Sequence and analysis of chromosome 2 of the plant Arabidopsis thaliana.</title>
        <authorList>
            <person name="Lin X."/>
            <person name="Kaul S."/>
            <person name="Rounsley S.D."/>
            <person name="Shea T.P."/>
            <person name="Benito M.-I."/>
            <person name="Town C.D."/>
            <person name="Fujii C.Y."/>
            <person name="Mason T.M."/>
            <person name="Bowman C.L."/>
            <person name="Barnstead M.E."/>
            <person name="Feldblyum T.V."/>
            <person name="Buell C.R."/>
            <person name="Ketchum K.A."/>
            <person name="Lee J.J."/>
            <person name="Ronning C.M."/>
            <person name="Koo H.L."/>
            <person name="Moffat K.S."/>
            <person name="Cronin L.A."/>
            <person name="Shen M."/>
            <person name="Pai G."/>
            <person name="Van Aken S."/>
            <person name="Umayam L."/>
            <person name="Tallon L.J."/>
            <person name="Gill J.E."/>
            <person name="Adams M.D."/>
            <person name="Carrera A.J."/>
            <person name="Creasy T.H."/>
            <person name="Goodman H.M."/>
            <person name="Somerville C.R."/>
            <person name="Copenhaver G.P."/>
            <person name="Preuss D."/>
            <person name="Nierman W.C."/>
            <person name="White O."/>
            <person name="Eisen J.A."/>
            <person name="Salzberg S.L."/>
            <person name="Fraser C.M."/>
            <person name="Venter J.C."/>
        </authorList>
    </citation>
    <scope>NUCLEOTIDE SEQUENCE [LARGE SCALE GENOMIC DNA]</scope>
    <source>
        <strain>cv. Columbia</strain>
    </source>
</reference>
<reference key="2">
    <citation type="journal article" date="2017" name="Plant J.">
        <title>Araport11: a complete reannotation of the Arabidopsis thaliana reference genome.</title>
        <authorList>
            <person name="Cheng C.Y."/>
            <person name="Krishnakumar V."/>
            <person name="Chan A.P."/>
            <person name="Thibaud-Nissen F."/>
            <person name="Schobel S."/>
            <person name="Town C.D."/>
        </authorList>
    </citation>
    <scope>GENOME REANNOTATION</scope>
    <source>
        <strain>cv. Columbia</strain>
    </source>
</reference>
<reference key="3">
    <citation type="journal article" date="2003" name="Science">
        <title>Empirical analysis of transcriptional activity in the Arabidopsis genome.</title>
        <authorList>
            <person name="Yamada K."/>
            <person name="Lim J."/>
            <person name="Dale J.M."/>
            <person name="Chen H."/>
            <person name="Shinn P."/>
            <person name="Palm C.J."/>
            <person name="Southwick A.M."/>
            <person name="Wu H.C."/>
            <person name="Kim C.J."/>
            <person name="Nguyen M."/>
            <person name="Pham P.K."/>
            <person name="Cheuk R.F."/>
            <person name="Karlin-Newmann G."/>
            <person name="Liu S.X."/>
            <person name="Lam B."/>
            <person name="Sakano H."/>
            <person name="Wu T."/>
            <person name="Yu G."/>
            <person name="Miranda M."/>
            <person name="Quach H.L."/>
            <person name="Tripp M."/>
            <person name="Chang C.H."/>
            <person name="Lee J.M."/>
            <person name="Toriumi M.J."/>
            <person name="Chan M.M."/>
            <person name="Tang C.C."/>
            <person name="Onodera C.S."/>
            <person name="Deng J.M."/>
            <person name="Akiyama K."/>
            <person name="Ansari Y."/>
            <person name="Arakawa T."/>
            <person name="Banh J."/>
            <person name="Banno F."/>
            <person name="Bowser L."/>
            <person name="Brooks S.Y."/>
            <person name="Carninci P."/>
            <person name="Chao Q."/>
            <person name="Choy N."/>
            <person name="Enju A."/>
            <person name="Goldsmith A.D."/>
            <person name="Gurjal M."/>
            <person name="Hansen N.F."/>
            <person name="Hayashizaki Y."/>
            <person name="Johnson-Hopson C."/>
            <person name="Hsuan V.W."/>
            <person name="Iida K."/>
            <person name="Karnes M."/>
            <person name="Khan S."/>
            <person name="Koesema E."/>
            <person name="Ishida J."/>
            <person name="Jiang P.X."/>
            <person name="Jones T."/>
            <person name="Kawai J."/>
            <person name="Kamiya A."/>
            <person name="Meyers C."/>
            <person name="Nakajima M."/>
            <person name="Narusaka M."/>
            <person name="Seki M."/>
            <person name="Sakurai T."/>
            <person name="Satou M."/>
            <person name="Tamse R."/>
            <person name="Vaysberg M."/>
            <person name="Wallender E.K."/>
            <person name="Wong C."/>
            <person name="Yamamura Y."/>
            <person name="Yuan S."/>
            <person name="Shinozaki K."/>
            <person name="Davis R.W."/>
            <person name="Theologis A."/>
            <person name="Ecker J.R."/>
        </authorList>
    </citation>
    <scope>NUCLEOTIDE SEQUENCE [LARGE SCALE MRNA]</scope>
    <source>
        <strain>cv. Columbia</strain>
    </source>
</reference>
<reference key="4">
    <citation type="submission" date="2006-07" db="EMBL/GenBank/DDBJ databases">
        <title>Large-scale analysis of RIKEN Arabidopsis full-length (RAFL) cDNAs.</title>
        <authorList>
            <person name="Totoki Y."/>
            <person name="Seki M."/>
            <person name="Ishida J."/>
            <person name="Nakajima M."/>
            <person name="Enju A."/>
            <person name="Kamiya A."/>
            <person name="Narusaka M."/>
            <person name="Shin-i T."/>
            <person name="Nakagawa M."/>
            <person name="Sakamoto N."/>
            <person name="Oishi K."/>
            <person name="Kohara Y."/>
            <person name="Kobayashi M."/>
            <person name="Toyoda A."/>
            <person name="Sakaki Y."/>
            <person name="Sakurai T."/>
            <person name="Iida K."/>
            <person name="Akiyama K."/>
            <person name="Satou M."/>
            <person name="Toyoda T."/>
            <person name="Konagaya A."/>
            <person name="Carninci P."/>
            <person name="Kawai J."/>
            <person name="Hayashizaki Y."/>
            <person name="Shinozaki K."/>
        </authorList>
    </citation>
    <scope>NUCLEOTIDE SEQUENCE [LARGE SCALE MRNA]</scope>
    <source>
        <strain>cv. Columbia</strain>
    </source>
</reference>
<reference key="5">
    <citation type="submission" date="2006-07" db="EMBL/GenBank/DDBJ databases">
        <title>Arabidopsis ORF clones.</title>
        <authorList>
            <person name="Quinitio C."/>
            <person name="Chen H."/>
            <person name="Kim C.J."/>
            <person name="Shinn P."/>
            <person name="Ecker J.R."/>
        </authorList>
    </citation>
    <scope>NUCLEOTIDE SEQUENCE [LARGE SCALE MRNA]</scope>
    <source>
        <strain>cv. Columbia</strain>
    </source>
</reference>
<reference key="6">
    <citation type="submission" date="2002-03" db="EMBL/GenBank/DDBJ databases">
        <title>Full-length cDNA from Arabidopsis thaliana.</title>
        <authorList>
            <person name="Brover V.V."/>
            <person name="Troukhan M.E."/>
            <person name="Alexandrov N.A."/>
            <person name="Lu Y.-P."/>
            <person name="Flavell R.B."/>
            <person name="Feldmann K.A."/>
        </authorList>
    </citation>
    <scope>NUCLEOTIDE SEQUENCE [LARGE SCALE MRNA]</scope>
</reference>
<reference key="7">
    <citation type="journal article" date="2007" name="Proc. Natl. Acad. Sci. U.S.A.">
        <title>A gene essential for hydrotropism in roots.</title>
        <authorList>
            <person name="Kobayashi A."/>
            <person name="Takahashi A."/>
            <person name="Kakimoto Y."/>
            <person name="Miyazawa Y."/>
            <person name="Fujii N."/>
            <person name="Higashitani A."/>
            <person name="Takahashi H."/>
        </authorList>
    </citation>
    <scope>FUNCTION</scope>
    <scope>TISSUE SPECIFICITY</scope>
    <scope>DISRUPTION PHENOTYPE</scope>
    <scope>MUTAGENESIS OF GLY-235</scope>
</reference>
<reference key="8">
    <citation type="journal article" date="2011" name="Plant Physiol.">
        <title>Hormonal regulation of lateral root development in Arabidopsis modulated by MIZ1 and requirement of GNOM activity for MIZ1 function.</title>
        <authorList>
            <person name="Moriwaki T."/>
            <person name="Miyazawa Y."/>
            <person name="Kobayashi A."/>
            <person name="Uchida M."/>
            <person name="Watanabe C."/>
            <person name="Fujii N."/>
            <person name="Takahashi H."/>
        </authorList>
    </citation>
    <scope>FUNCTION</scope>
</reference>
<reference key="9">
    <citation type="journal article" date="2012" name="FEBS Lett.">
        <title>MIZ1, an essential protein for root hydrotropism, is associated with the cytoplasmic face of the endoplasmic reticulum membrane in Arabidopsis root cells.</title>
        <authorList>
            <person name="Yamazaki T."/>
            <person name="Miyazawa Y."/>
            <person name="Kobayashi A."/>
            <person name="Moriwaki T."/>
            <person name="Fujii N."/>
            <person name="Takahashi H."/>
        </authorList>
    </citation>
    <scope>FUNCTION</scope>
    <scope>SUBCELLULAR LOCATION</scope>
    <scope>TISSUE SPECIFICITY</scope>
    <scope>MUTAGENESIS OF GLY-235</scope>
</reference>
<reference key="10">
    <citation type="journal article" date="2012" name="Plant Cell Physiol.">
        <title>Overexpression of MIZU-KUSSEI1 enhances the root hydrotropic response by retaining cell viability under hydrostimulated conditions in Arabidopsis thaliana.</title>
        <authorList>
            <person name="Miyazawa Y."/>
            <person name="Moriwaki T."/>
            <person name="Uchida M."/>
            <person name="Kobayashi A."/>
            <person name="Fujii N."/>
            <person name="Takahashi H."/>
        </authorList>
    </citation>
    <scope>FUNCTION</scope>
</reference>
<reference key="11">
    <citation type="journal article" date="2012" name="Plant Cell Environ.">
        <title>Light and abscisic acid signalling are integrated by MIZ1 gene expression and regulate hydrotropic response in roots of Arabidopsis thaliana.</title>
        <authorList>
            <person name="Moriwaki T."/>
            <person name="Miyazawa Y."/>
            <person name="Fujii N."/>
            <person name="Takahashi H."/>
        </authorList>
    </citation>
    <scope>FUNCTION</scope>
    <scope>INDUCTION</scope>
</reference>
<feature type="chain" id="PRO_0000423017" description="Protein MIZU-KUSSEI 1">
    <location>
        <begin position="1"/>
        <end position="297"/>
    </location>
</feature>
<feature type="mutagenesis site" description="In miz1; defects in hydrotropic response." evidence="1 3">
    <original>G</original>
    <variation>E</variation>
    <location>
        <position position="235"/>
    </location>
</feature>
<feature type="sequence conflict" description="In Ref. 6; AAM64986." evidence="6" ref="6">
    <original>R</original>
    <variation>S</variation>
    <location>
        <position position="150"/>
    </location>
</feature>
<dbReference type="EMBL" id="AC002510">
    <property type="protein sequence ID" value="AAB84348.1"/>
    <property type="molecule type" value="Genomic_DNA"/>
</dbReference>
<dbReference type="EMBL" id="CP002685">
    <property type="protein sequence ID" value="AEC10013.1"/>
    <property type="molecule type" value="Genomic_DNA"/>
</dbReference>
<dbReference type="EMBL" id="AF345340">
    <property type="protein sequence ID" value="AAK31144.1"/>
    <property type="molecule type" value="mRNA"/>
</dbReference>
<dbReference type="EMBL" id="AK227967">
    <property type="protein sequence ID" value="BAE99934.1"/>
    <property type="molecule type" value="mRNA"/>
</dbReference>
<dbReference type="EMBL" id="BT026058">
    <property type="protein sequence ID" value="ABG48414.1"/>
    <property type="molecule type" value="mRNA"/>
</dbReference>
<dbReference type="EMBL" id="AY087440">
    <property type="protein sequence ID" value="AAM64986.1"/>
    <property type="molecule type" value="mRNA"/>
</dbReference>
<dbReference type="PIR" id="T00822">
    <property type="entry name" value="T00822"/>
</dbReference>
<dbReference type="RefSeq" id="NP_565953.1">
    <property type="nucleotide sequence ID" value="NM_129729.3"/>
</dbReference>
<dbReference type="FunCoup" id="O22227">
    <property type="interactions" value="4"/>
</dbReference>
<dbReference type="STRING" id="3702.O22227"/>
<dbReference type="GlyGen" id="O22227">
    <property type="glycosylation" value="1 site"/>
</dbReference>
<dbReference type="iPTMnet" id="O22227"/>
<dbReference type="PaxDb" id="3702-AT2G41660.1"/>
<dbReference type="ProteomicsDB" id="237116"/>
<dbReference type="EnsemblPlants" id="AT2G41660.1">
    <property type="protein sequence ID" value="AT2G41660.1"/>
    <property type="gene ID" value="AT2G41660"/>
</dbReference>
<dbReference type="GeneID" id="818764"/>
<dbReference type="Gramene" id="AT2G41660.1">
    <property type="protein sequence ID" value="AT2G41660.1"/>
    <property type="gene ID" value="AT2G41660"/>
</dbReference>
<dbReference type="KEGG" id="ath:AT2G41660"/>
<dbReference type="Araport" id="AT2G41660"/>
<dbReference type="TAIR" id="AT2G41660">
    <property type="gene designation" value="MIZ1"/>
</dbReference>
<dbReference type="eggNOG" id="ENOG502QU42">
    <property type="taxonomic scope" value="Eukaryota"/>
</dbReference>
<dbReference type="HOGENOM" id="CLU_057026_0_0_1"/>
<dbReference type="InParanoid" id="O22227"/>
<dbReference type="OMA" id="LFHEPAW"/>
<dbReference type="PhylomeDB" id="O22227"/>
<dbReference type="PRO" id="PR:O22227"/>
<dbReference type="Proteomes" id="UP000006548">
    <property type="component" value="Chromosome 2"/>
</dbReference>
<dbReference type="ExpressionAtlas" id="O22227">
    <property type="expression patterns" value="baseline and differential"/>
</dbReference>
<dbReference type="GO" id="GO:0032541">
    <property type="term" value="C:cortical endoplasmic reticulum"/>
    <property type="evidence" value="ECO:0000314"/>
    <property type="project" value="TAIR"/>
</dbReference>
<dbReference type="GO" id="GO:0005737">
    <property type="term" value="C:cytoplasm"/>
    <property type="evidence" value="ECO:0000314"/>
    <property type="project" value="TAIR"/>
</dbReference>
<dbReference type="GO" id="GO:0005783">
    <property type="term" value="C:endoplasmic reticulum"/>
    <property type="evidence" value="ECO:0000314"/>
    <property type="project" value="TAIR"/>
</dbReference>
<dbReference type="GO" id="GO:0005789">
    <property type="term" value="C:endoplasmic reticulum membrane"/>
    <property type="evidence" value="ECO:0000314"/>
    <property type="project" value="TAIR"/>
</dbReference>
<dbReference type="GO" id="GO:0016020">
    <property type="term" value="C:membrane"/>
    <property type="evidence" value="ECO:0000314"/>
    <property type="project" value="TAIR"/>
</dbReference>
<dbReference type="GO" id="GO:0009658">
    <property type="term" value="P:chloroplast organization"/>
    <property type="evidence" value="ECO:0000315"/>
    <property type="project" value="TAIR"/>
</dbReference>
<dbReference type="GO" id="GO:0010274">
    <property type="term" value="P:hydrotropism"/>
    <property type="evidence" value="ECO:0000315"/>
    <property type="project" value="UniProtKB"/>
</dbReference>
<dbReference type="InterPro" id="IPR006460">
    <property type="entry name" value="MIZ1-like_pln"/>
</dbReference>
<dbReference type="NCBIfam" id="TIGR01570">
    <property type="entry name" value="A_thal_3588"/>
    <property type="match status" value="1"/>
</dbReference>
<dbReference type="PANTHER" id="PTHR31696">
    <property type="entry name" value="PROTEIN MIZU-KUSSEI 1"/>
    <property type="match status" value="1"/>
</dbReference>
<dbReference type="PANTHER" id="PTHR31696:SF71">
    <property type="entry name" value="PROTEIN MIZU-KUSSEI 1"/>
    <property type="match status" value="1"/>
</dbReference>
<dbReference type="Pfam" id="PF04759">
    <property type="entry name" value="DUF617"/>
    <property type="match status" value="1"/>
</dbReference>
<keyword id="KW-0256">Endoplasmic reticulum</keyword>
<keyword id="KW-0472">Membrane</keyword>
<keyword id="KW-1185">Reference proteome</keyword>
<protein>
    <recommendedName>
        <fullName>Protein MIZU-KUSSEI 1</fullName>
    </recommendedName>
</protein>
<name>MIZ1_ARATH</name>
<comment type="function">
    <text evidence="1 2 3 4 5">Plays a role in lateral root development by maintaining auxin levels. This function requires GNOM (GN/MIZ2) activity. Negatively regulates cytokinin sensitivity on root development. Positively regulates hydrotropism in roots.</text>
</comment>
<comment type="subcellular location">
    <subcellularLocation>
        <location evidence="3">Endoplasmic reticulum membrane</location>
    </subcellularLocation>
    <text>Soluble protein associated with the ER.</text>
</comment>
<comment type="tissue specificity">
    <text evidence="1 3">Expressed in root meristematic region, cortical cells, lateral root cap cells, columella cells of the root cap, mature region of the roots and leaf hydathodes.</text>
</comment>
<comment type="induction">
    <text evidence="4">By light and abscisic acid (ABA) in roots.</text>
</comment>
<comment type="disruption phenotype">
    <text evidence="1">No visible phenotype under normal growth conditions, but mutant plants are impaired in hydrotropic response.</text>
</comment>
<comment type="miscellaneous">
    <text evidence="7 8">The Japanese words 'mizu' and 'kussei' means water and tropism, respectively (PubMed:17360591). Plants over-expressing MIZ1 in roots have a reduced number of lateral roots formed, however this defect is recovered with the application of auxin (PubMed:21940997).</text>
</comment>
<organism>
    <name type="scientific">Arabidopsis thaliana</name>
    <name type="common">Mouse-ear cress</name>
    <dbReference type="NCBI Taxonomy" id="3702"/>
    <lineage>
        <taxon>Eukaryota</taxon>
        <taxon>Viridiplantae</taxon>
        <taxon>Streptophyta</taxon>
        <taxon>Embryophyta</taxon>
        <taxon>Tracheophyta</taxon>
        <taxon>Spermatophyta</taxon>
        <taxon>Magnoliopsida</taxon>
        <taxon>eudicotyledons</taxon>
        <taxon>Gunneridae</taxon>
        <taxon>Pentapetalae</taxon>
        <taxon>rosids</taxon>
        <taxon>malvids</taxon>
        <taxon>Brassicales</taxon>
        <taxon>Brassicaceae</taxon>
        <taxon>Camelineae</taxon>
        <taxon>Arabidopsis</taxon>
    </lineage>
</organism>
<accession>O22227</accession>
<accession>Q8LB38</accession>
<evidence type="ECO:0000269" key="1">
    <source>
    </source>
</evidence>
<evidence type="ECO:0000269" key="2">
    <source>
    </source>
</evidence>
<evidence type="ECO:0000269" key="3">
    <source>
    </source>
</evidence>
<evidence type="ECO:0000269" key="4">
    <source>
    </source>
</evidence>
<evidence type="ECO:0000269" key="5">
    <source>
    </source>
</evidence>
<evidence type="ECO:0000305" key="6"/>
<evidence type="ECO:0000305" key="7">
    <source>
    </source>
</evidence>
<evidence type="ECO:0000305" key="8">
    <source>
    </source>
</evidence>
<sequence length="297" mass="32510">MVPYQELTLQRSFSYNSRKINPVTSPARSSHVRSPSSSALIPSIPEHELFLVPCRRCSYVPLSSSSSASHNIGKFHLKFSLLLRSFINIINIPACKMLSLPSPPSSSSSVSNQLISLVTGGSSSLGRRVTGTLYGHKRGHVTFSVQYNQRSDPVLLLDLAMSTATLVKEMSSGLVRIALECEKRHRSGTKLFQEPKWTMYCNGRKCGYAVSRGGACTDTDWRVLNTVSRVTVGAGVIPTPKTIDDVSGVGSGTELGELLYMRGKFERVVGSRDSEAFYMMNPDKNGGPELSIFLLRI</sequence>
<gene>
    <name type="primary">MIZ1</name>
    <name type="ordered locus">At2g41660</name>
    <name type="ORF">T32G6.18</name>
</gene>